<accession>Q65DW5</accession>
<accession>Q62PD7</accession>
<reference key="1">
    <citation type="journal article" date="2004" name="J. Mol. Microbiol. Biotechnol.">
        <title>The complete genome sequence of Bacillus licheniformis DSM13, an organism with great industrial potential.</title>
        <authorList>
            <person name="Veith B."/>
            <person name="Herzberg C."/>
            <person name="Steckel S."/>
            <person name="Feesche J."/>
            <person name="Maurer K.H."/>
            <person name="Ehrenreich P."/>
            <person name="Baeumer S."/>
            <person name="Henne A."/>
            <person name="Liesegang H."/>
            <person name="Merkl R."/>
            <person name="Ehrenreich A."/>
            <person name="Gottschalk G."/>
        </authorList>
    </citation>
    <scope>NUCLEOTIDE SEQUENCE [LARGE SCALE GENOMIC DNA]</scope>
    <source>
        <strain>ATCC 14580 / DSM 13 / JCM 2505 / CCUG 7422 / NBRC 12200 / NCIMB 9375 / NCTC 10341 / NRRL NRS-1264 / Gibson 46</strain>
    </source>
</reference>
<reference key="2">
    <citation type="journal article" date="2004" name="Genome Biol.">
        <title>Complete genome sequence of the industrial bacterium Bacillus licheniformis and comparisons with closely related Bacillus species.</title>
        <authorList>
            <person name="Rey M.W."/>
            <person name="Ramaiya P."/>
            <person name="Nelson B.A."/>
            <person name="Brody-Karpin S.D."/>
            <person name="Zaretsky E.J."/>
            <person name="Tang M."/>
            <person name="Lopez de Leon A."/>
            <person name="Xiang H."/>
            <person name="Gusti V."/>
            <person name="Clausen I.G."/>
            <person name="Olsen P.B."/>
            <person name="Rasmussen M.D."/>
            <person name="Andersen J.T."/>
            <person name="Joergensen P.L."/>
            <person name="Larsen T.S."/>
            <person name="Sorokin A."/>
            <person name="Bolotin A."/>
            <person name="Lapidus A."/>
            <person name="Galleron N."/>
            <person name="Ehrlich S.D."/>
            <person name="Berka R.M."/>
        </authorList>
    </citation>
    <scope>NUCLEOTIDE SEQUENCE [LARGE SCALE GENOMIC DNA]</scope>
    <source>
        <strain>ATCC 14580 / DSM 13 / JCM 2505 / CCUG 7422 / NBRC 12200 / NCIMB 9375 / NCTC 10341 / NRRL NRS-1264 / Gibson 46</strain>
    </source>
</reference>
<gene>
    <name evidence="1" type="primary">glyA</name>
    <name type="ordered locus">BLi03935</name>
    <name type="ordered locus">BL03991</name>
</gene>
<sequence>MKHLPAQDEQVFSAIQDERKRQQSKIELIASENFVSEAVMEAQGSVLTNKYAEGYPGKRYYGGCEHVDVAEDIARDRAKQIFGAEHVNVQPHSGAQANMAVYFTILEHGDTVLGMNLAHGGHLTHGSPVNFSGVQYNFVEYGVDKETQYIDYEDVREKALKHKPKLIVAGASAYPRTIDFKKFREIADEVGAYVMVDMAHIAGLVAAGLHPNPVPYADFVTTTTHKTLRGPRGGMILCREEFAKQIDKSIFPGIQGGPLMHVIAAKAVSFGEALKDEFKTYAQNVINNAKRLAETLKKEGIELVSGGTDNHLVLVDLRSLGITGKVAENVLDEVGITVNKNAIPYDPEKPFVTSGIRVGTAAVTSRGFDLEAIEEVGAIIALALKNHEDEAKLEEAKQRVEALTNRFPLYTGLDY</sequence>
<keyword id="KW-0028">Amino-acid biosynthesis</keyword>
<keyword id="KW-0963">Cytoplasm</keyword>
<keyword id="KW-0554">One-carbon metabolism</keyword>
<keyword id="KW-0663">Pyridoxal phosphate</keyword>
<keyword id="KW-1185">Reference proteome</keyword>
<keyword id="KW-0808">Transferase</keyword>
<proteinExistence type="inferred from homology"/>
<protein>
    <recommendedName>
        <fullName evidence="1">Serine hydroxymethyltransferase</fullName>
        <shortName evidence="1">SHMT</shortName>
        <shortName evidence="1">Serine methylase</shortName>
        <ecNumber evidence="1">2.1.2.1</ecNumber>
    </recommendedName>
</protein>
<name>GLYA_BACLD</name>
<dbReference type="EC" id="2.1.2.1" evidence="1"/>
<dbReference type="EMBL" id="AE017333">
    <property type="protein sequence ID" value="AAU42749.1"/>
    <property type="molecule type" value="Genomic_DNA"/>
</dbReference>
<dbReference type="EMBL" id="CP000002">
    <property type="protein sequence ID" value="AAU25374.1"/>
    <property type="molecule type" value="Genomic_DNA"/>
</dbReference>
<dbReference type="RefSeq" id="WP_003186018.1">
    <property type="nucleotide sequence ID" value="NC_006322.1"/>
</dbReference>
<dbReference type="SMR" id="Q65DW5"/>
<dbReference type="STRING" id="279010.BL03991"/>
<dbReference type="GeneID" id="92859492"/>
<dbReference type="KEGG" id="bld:BLi03935"/>
<dbReference type="KEGG" id="bli:BL03991"/>
<dbReference type="eggNOG" id="COG0112">
    <property type="taxonomic scope" value="Bacteria"/>
</dbReference>
<dbReference type="HOGENOM" id="CLU_022477_2_1_9"/>
<dbReference type="UniPathway" id="UPA00193"/>
<dbReference type="UniPathway" id="UPA00288">
    <property type="reaction ID" value="UER01023"/>
</dbReference>
<dbReference type="Proteomes" id="UP000000606">
    <property type="component" value="Chromosome"/>
</dbReference>
<dbReference type="GO" id="GO:0005829">
    <property type="term" value="C:cytosol"/>
    <property type="evidence" value="ECO:0007669"/>
    <property type="project" value="TreeGrafter"/>
</dbReference>
<dbReference type="GO" id="GO:0004372">
    <property type="term" value="F:glycine hydroxymethyltransferase activity"/>
    <property type="evidence" value="ECO:0007669"/>
    <property type="project" value="UniProtKB-UniRule"/>
</dbReference>
<dbReference type="GO" id="GO:0030170">
    <property type="term" value="F:pyridoxal phosphate binding"/>
    <property type="evidence" value="ECO:0007669"/>
    <property type="project" value="UniProtKB-UniRule"/>
</dbReference>
<dbReference type="GO" id="GO:0019264">
    <property type="term" value="P:glycine biosynthetic process from serine"/>
    <property type="evidence" value="ECO:0007669"/>
    <property type="project" value="UniProtKB-UniRule"/>
</dbReference>
<dbReference type="GO" id="GO:0035999">
    <property type="term" value="P:tetrahydrofolate interconversion"/>
    <property type="evidence" value="ECO:0007669"/>
    <property type="project" value="UniProtKB-UniRule"/>
</dbReference>
<dbReference type="CDD" id="cd00378">
    <property type="entry name" value="SHMT"/>
    <property type="match status" value="1"/>
</dbReference>
<dbReference type="FunFam" id="3.40.640.10:FF:000001">
    <property type="entry name" value="Serine hydroxymethyltransferase"/>
    <property type="match status" value="1"/>
</dbReference>
<dbReference type="FunFam" id="3.90.1150.10:FF:000003">
    <property type="entry name" value="Serine hydroxymethyltransferase"/>
    <property type="match status" value="1"/>
</dbReference>
<dbReference type="Gene3D" id="3.90.1150.10">
    <property type="entry name" value="Aspartate Aminotransferase, domain 1"/>
    <property type="match status" value="1"/>
</dbReference>
<dbReference type="Gene3D" id="3.40.640.10">
    <property type="entry name" value="Type I PLP-dependent aspartate aminotransferase-like (Major domain)"/>
    <property type="match status" value="1"/>
</dbReference>
<dbReference type="HAMAP" id="MF_00051">
    <property type="entry name" value="SHMT"/>
    <property type="match status" value="1"/>
</dbReference>
<dbReference type="InterPro" id="IPR015424">
    <property type="entry name" value="PyrdxlP-dep_Trfase"/>
</dbReference>
<dbReference type="InterPro" id="IPR015421">
    <property type="entry name" value="PyrdxlP-dep_Trfase_major"/>
</dbReference>
<dbReference type="InterPro" id="IPR015422">
    <property type="entry name" value="PyrdxlP-dep_Trfase_small"/>
</dbReference>
<dbReference type="InterPro" id="IPR001085">
    <property type="entry name" value="Ser_HO-MeTrfase"/>
</dbReference>
<dbReference type="InterPro" id="IPR049943">
    <property type="entry name" value="Ser_HO-MeTrfase-like"/>
</dbReference>
<dbReference type="InterPro" id="IPR019798">
    <property type="entry name" value="Ser_HO-MeTrfase_PLP_BS"/>
</dbReference>
<dbReference type="InterPro" id="IPR039429">
    <property type="entry name" value="SHMT-like_dom"/>
</dbReference>
<dbReference type="NCBIfam" id="NF000586">
    <property type="entry name" value="PRK00011.1"/>
    <property type="match status" value="1"/>
</dbReference>
<dbReference type="PANTHER" id="PTHR11680">
    <property type="entry name" value="SERINE HYDROXYMETHYLTRANSFERASE"/>
    <property type="match status" value="1"/>
</dbReference>
<dbReference type="PANTHER" id="PTHR11680:SF35">
    <property type="entry name" value="SERINE HYDROXYMETHYLTRANSFERASE 1"/>
    <property type="match status" value="1"/>
</dbReference>
<dbReference type="Pfam" id="PF00464">
    <property type="entry name" value="SHMT"/>
    <property type="match status" value="1"/>
</dbReference>
<dbReference type="PIRSF" id="PIRSF000412">
    <property type="entry name" value="SHMT"/>
    <property type="match status" value="1"/>
</dbReference>
<dbReference type="SUPFAM" id="SSF53383">
    <property type="entry name" value="PLP-dependent transferases"/>
    <property type="match status" value="1"/>
</dbReference>
<dbReference type="PROSITE" id="PS00096">
    <property type="entry name" value="SHMT"/>
    <property type="match status" value="1"/>
</dbReference>
<comment type="function">
    <text evidence="1">Catalyzes the reversible interconversion of serine and glycine with tetrahydrofolate (THF) serving as the one-carbon carrier. This reaction serves as the major source of one-carbon groups required for the biosynthesis of purines, thymidylate, methionine, and other important biomolecules. Also exhibits THF-independent aldolase activity toward beta-hydroxyamino acids, producing glycine and aldehydes, via a retro-aldol mechanism.</text>
</comment>
<comment type="catalytic activity">
    <reaction evidence="1">
        <text>(6R)-5,10-methylene-5,6,7,8-tetrahydrofolate + glycine + H2O = (6S)-5,6,7,8-tetrahydrofolate + L-serine</text>
        <dbReference type="Rhea" id="RHEA:15481"/>
        <dbReference type="ChEBI" id="CHEBI:15377"/>
        <dbReference type="ChEBI" id="CHEBI:15636"/>
        <dbReference type="ChEBI" id="CHEBI:33384"/>
        <dbReference type="ChEBI" id="CHEBI:57305"/>
        <dbReference type="ChEBI" id="CHEBI:57453"/>
        <dbReference type="EC" id="2.1.2.1"/>
    </reaction>
</comment>
<comment type="cofactor">
    <cofactor evidence="1">
        <name>pyridoxal 5'-phosphate</name>
        <dbReference type="ChEBI" id="CHEBI:597326"/>
    </cofactor>
</comment>
<comment type="pathway">
    <text evidence="1">One-carbon metabolism; tetrahydrofolate interconversion.</text>
</comment>
<comment type="pathway">
    <text evidence="1">Amino-acid biosynthesis; glycine biosynthesis; glycine from L-serine: step 1/1.</text>
</comment>
<comment type="subunit">
    <text evidence="1">Homodimer.</text>
</comment>
<comment type="subcellular location">
    <subcellularLocation>
        <location evidence="1">Cytoplasm</location>
    </subcellularLocation>
</comment>
<comment type="similarity">
    <text evidence="1">Belongs to the SHMT family.</text>
</comment>
<evidence type="ECO:0000255" key="1">
    <source>
        <dbReference type="HAMAP-Rule" id="MF_00051"/>
    </source>
</evidence>
<feature type="chain" id="PRO_0000234949" description="Serine hydroxymethyltransferase">
    <location>
        <begin position="1"/>
        <end position="415"/>
    </location>
</feature>
<feature type="binding site" evidence="1">
    <location>
        <position position="117"/>
    </location>
    <ligand>
        <name>(6S)-5,6,7,8-tetrahydrofolate</name>
        <dbReference type="ChEBI" id="CHEBI:57453"/>
    </ligand>
</feature>
<feature type="binding site" evidence="1">
    <location>
        <begin position="121"/>
        <end position="123"/>
    </location>
    <ligand>
        <name>(6S)-5,6,7,8-tetrahydrofolate</name>
        <dbReference type="ChEBI" id="CHEBI:57453"/>
    </ligand>
</feature>
<feature type="binding site" evidence="1">
    <location>
        <position position="241"/>
    </location>
    <ligand>
        <name>(6S)-5,6,7,8-tetrahydrofolate</name>
        <dbReference type="ChEBI" id="CHEBI:57453"/>
    </ligand>
</feature>
<feature type="site" description="Plays an important role in substrate specificity" evidence="1">
    <location>
        <position position="225"/>
    </location>
</feature>
<feature type="modified residue" description="N6-(pyridoxal phosphate)lysine" evidence="1">
    <location>
        <position position="226"/>
    </location>
</feature>
<organism>
    <name type="scientific">Bacillus licheniformis (strain ATCC 14580 / DSM 13 / JCM 2505 / CCUG 7422 / NBRC 12200 / NCIMB 9375 / NCTC 10341 / NRRL NRS-1264 / Gibson 46)</name>
    <dbReference type="NCBI Taxonomy" id="279010"/>
    <lineage>
        <taxon>Bacteria</taxon>
        <taxon>Bacillati</taxon>
        <taxon>Bacillota</taxon>
        <taxon>Bacilli</taxon>
        <taxon>Bacillales</taxon>
        <taxon>Bacillaceae</taxon>
        <taxon>Bacillus</taxon>
    </lineage>
</organism>